<protein>
    <recommendedName>
        <fullName evidence="1">Ribonuclease 3</fullName>
        <ecNumber evidence="1">3.1.26.3</ecNumber>
    </recommendedName>
    <alternativeName>
        <fullName evidence="1">Ribonuclease III</fullName>
        <shortName evidence="1">RNase III</shortName>
    </alternativeName>
</protein>
<reference key="1">
    <citation type="journal article" date="2004" name="Science">
        <title>The genomic sequence of the accidental pathogen Legionella pneumophila.</title>
        <authorList>
            <person name="Chien M."/>
            <person name="Morozova I."/>
            <person name="Shi S."/>
            <person name="Sheng H."/>
            <person name="Chen J."/>
            <person name="Gomez S.M."/>
            <person name="Asamani G."/>
            <person name="Hill K."/>
            <person name="Nuara J."/>
            <person name="Feder M."/>
            <person name="Rineer J."/>
            <person name="Greenberg J.J."/>
            <person name="Steshenko V."/>
            <person name="Park S.H."/>
            <person name="Zhao B."/>
            <person name="Teplitskaya E."/>
            <person name="Edwards J.R."/>
            <person name="Pampou S."/>
            <person name="Georghiou A."/>
            <person name="Chou I.-C."/>
            <person name="Iannuccilli W."/>
            <person name="Ulz M.E."/>
            <person name="Kim D.H."/>
            <person name="Geringer-Sameth A."/>
            <person name="Goldsberry C."/>
            <person name="Morozov P."/>
            <person name="Fischer S.G."/>
            <person name="Segal G."/>
            <person name="Qu X."/>
            <person name="Rzhetsky A."/>
            <person name="Zhang P."/>
            <person name="Cayanis E."/>
            <person name="De Jong P.J."/>
            <person name="Ju J."/>
            <person name="Kalachikov S."/>
            <person name="Shuman H.A."/>
            <person name="Russo J.J."/>
        </authorList>
    </citation>
    <scope>NUCLEOTIDE SEQUENCE [LARGE SCALE GENOMIC DNA]</scope>
    <source>
        <strain>Philadelphia 1 / ATCC 33152 / DSM 7513</strain>
    </source>
</reference>
<proteinExistence type="inferred from homology"/>
<organism>
    <name type="scientific">Legionella pneumophila subsp. pneumophila (strain Philadelphia 1 / ATCC 33152 / DSM 7513)</name>
    <dbReference type="NCBI Taxonomy" id="272624"/>
    <lineage>
        <taxon>Bacteria</taxon>
        <taxon>Pseudomonadati</taxon>
        <taxon>Pseudomonadota</taxon>
        <taxon>Gammaproteobacteria</taxon>
        <taxon>Legionellales</taxon>
        <taxon>Legionellaceae</taxon>
        <taxon>Legionella</taxon>
    </lineage>
</organism>
<name>RNC_LEGPH</name>
<keyword id="KW-0963">Cytoplasm</keyword>
<keyword id="KW-0255">Endonuclease</keyword>
<keyword id="KW-0378">Hydrolase</keyword>
<keyword id="KW-0460">Magnesium</keyword>
<keyword id="KW-0479">Metal-binding</keyword>
<keyword id="KW-0507">mRNA processing</keyword>
<keyword id="KW-0540">Nuclease</keyword>
<keyword id="KW-1185">Reference proteome</keyword>
<keyword id="KW-0694">RNA-binding</keyword>
<keyword id="KW-0698">rRNA processing</keyword>
<keyword id="KW-0699">rRNA-binding</keyword>
<keyword id="KW-0819">tRNA processing</keyword>
<feature type="chain" id="PRO_0000228544" description="Ribonuclease 3">
    <location>
        <begin position="1"/>
        <end position="224"/>
    </location>
</feature>
<feature type="domain" description="RNase III" evidence="1">
    <location>
        <begin position="5"/>
        <end position="127"/>
    </location>
</feature>
<feature type="domain" description="DRBM" evidence="1">
    <location>
        <begin position="154"/>
        <end position="224"/>
    </location>
</feature>
<feature type="active site" evidence="1">
    <location>
        <position position="44"/>
    </location>
</feature>
<feature type="active site" evidence="1">
    <location>
        <position position="116"/>
    </location>
</feature>
<feature type="binding site" evidence="1">
    <location>
        <position position="40"/>
    </location>
    <ligand>
        <name>Mg(2+)</name>
        <dbReference type="ChEBI" id="CHEBI:18420"/>
    </ligand>
</feature>
<feature type="binding site" evidence="1">
    <location>
        <position position="113"/>
    </location>
    <ligand>
        <name>Mg(2+)</name>
        <dbReference type="ChEBI" id="CHEBI:18420"/>
    </ligand>
</feature>
<feature type="binding site" evidence="1">
    <location>
        <position position="116"/>
    </location>
    <ligand>
        <name>Mg(2+)</name>
        <dbReference type="ChEBI" id="CHEBI:18420"/>
    </ligand>
</feature>
<evidence type="ECO:0000255" key="1">
    <source>
        <dbReference type="HAMAP-Rule" id="MF_00104"/>
    </source>
</evidence>
<gene>
    <name evidence="1" type="primary">rnc</name>
    <name type="ordered locus">lpg1869</name>
</gene>
<sequence>MKINLERLCRRLNYHFNNIAYLKQALTHCSAGSDNYERFEFLGDSILSFVIANELFNRFPLHSEGQLSRLRSFLVKGEMLAEIAREIDLGDYLFLGQGELRSGGFRRTSILADALEAILAAIYLDGGMIAAKQIILMLYSSRLDDPDLNHCLKDAKTQLQEFLQASKFALPEYVLTKIEGDEHAQIFHVTCTIEGVSQVAYGTGPNRRKAEQLAAKAMLEQLQG</sequence>
<accession>Q5ZUD5</accession>
<dbReference type="EC" id="3.1.26.3" evidence="1"/>
<dbReference type="EMBL" id="AE017354">
    <property type="protein sequence ID" value="AAU27942.1"/>
    <property type="molecule type" value="Genomic_DNA"/>
</dbReference>
<dbReference type="RefSeq" id="WP_010947589.1">
    <property type="nucleotide sequence ID" value="NC_002942.5"/>
</dbReference>
<dbReference type="RefSeq" id="YP_095889.1">
    <property type="nucleotide sequence ID" value="NC_002942.5"/>
</dbReference>
<dbReference type="SMR" id="Q5ZUD5"/>
<dbReference type="STRING" id="272624.lpg1869"/>
<dbReference type="PaxDb" id="272624-lpg1869"/>
<dbReference type="GeneID" id="57035861"/>
<dbReference type="KEGG" id="lpn:lpg1869"/>
<dbReference type="PATRIC" id="fig|272624.6.peg.1954"/>
<dbReference type="eggNOG" id="COG0571">
    <property type="taxonomic scope" value="Bacteria"/>
</dbReference>
<dbReference type="HOGENOM" id="CLU_000907_1_1_6"/>
<dbReference type="OrthoDB" id="9805026at2"/>
<dbReference type="Proteomes" id="UP000000609">
    <property type="component" value="Chromosome"/>
</dbReference>
<dbReference type="GO" id="GO:0005737">
    <property type="term" value="C:cytoplasm"/>
    <property type="evidence" value="ECO:0007669"/>
    <property type="project" value="UniProtKB-SubCell"/>
</dbReference>
<dbReference type="GO" id="GO:0003725">
    <property type="term" value="F:double-stranded RNA binding"/>
    <property type="evidence" value="ECO:0007669"/>
    <property type="project" value="TreeGrafter"/>
</dbReference>
<dbReference type="GO" id="GO:0046872">
    <property type="term" value="F:metal ion binding"/>
    <property type="evidence" value="ECO:0007669"/>
    <property type="project" value="UniProtKB-KW"/>
</dbReference>
<dbReference type="GO" id="GO:0004525">
    <property type="term" value="F:ribonuclease III activity"/>
    <property type="evidence" value="ECO:0007669"/>
    <property type="project" value="UniProtKB-UniRule"/>
</dbReference>
<dbReference type="GO" id="GO:0019843">
    <property type="term" value="F:rRNA binding"/>
    <property type="evidence" value="ECO:0007669"/>
    <property type="project" value="UniProtKB-KW"/>
</dbReference>
<dbReference type="GO" id="GO:0006397">
    <property type="term" value="P:mRNA processing"/>
    <property type="evidence" value="ECO:0007669"/>
    <property type="project" value="UniProtKB-UniRule"/>
</dbReference>
<dbReference type="GO" id="GO:0010468">
    <property type="term" value="P:regulation of gene expression"/>
    <property type="evidence" value="ECO:0007669"/>
    <property type="project" value="TreeGrafter"/>
</dbReference>
<dbReference type="GO" id="GO:0006364">
    <property type="term" value="P:rRNA processing"/>
    <property type="evidence" value="ECO:0007669"/>
    <property type="project" value="UniProtKB-UniRule"/>
</dbReference>
<dbReference type="GO" id="GO:0008033">
    <property type="term" value="P:tRNA processing"/>
    <property type="evidence" value="ECO:0007669"/>
    <property type="project" value="UniProtKB-KW"/>
</dbReference>
<dbReference type="CDD" id="cd10845">
    <property type="entry name" value="DSRM_RNAse_III_family"/>
    <property type="match status" value="1"/>
</dbReference>
<dbReference type="CDD" id="cd00593">
    <property type="entry name" value="RIBOc"/>
    <property type="match status" value="1"/>
</dbReference>
<dbReference type="FunFam" id="1.10.1520.10:FF:000001">
    <property type="entry name" value="Ribonuclease 3"/>
    <property type="match status" value="1"/>
</dbReference>
<dbReference type="FunFam" id="3.30.160.20:FF:000003">
    <property type="entry name" value="Ribonuclease 3"/>
    <property type="match status" value="1"/>
</dbReference>
<dbReference type="Gene3D" id="3.30.160.20">
    <property type="match status" value="1"/>
</dbReference>
<dbReference type="Gene3D" id="1.10.1520.10">
    <property type="entry name" value="Ribonuclease III domain"/>
    <property type="match status" value="1"/>
</dbReference>
<dbReference type="HAMAP" id="MF_00104">
    <property type="entry name" value="RNase_III"/>
    <property type="match status" value="1"/>
</dbReference>
<dbReference type="InterPro" id="IPR014720">
    <property type="entry name" value="dsRBD_dom"/>
</dbReference>
<dbReference type="InterPro" id="IPR011907">
    <property type="entry name" value="RNase_III"/>
</dbReference>
<dbReference type="InterPro" id="IPR000999">
    <property type="entry name" value="RNase_III_dom"/>
</dbReference>
<dbReference type="InterPro" id="IPR036389">
    <property type="entry name" value="RNase_III_sf"/>
</dbReference>
<dbReference type="NCBIfam" id="TIGR02191">
    <property type="entry name" value="RNaseIII"/>
    <property type="match status" value="1"/>
</dbReference>
<dbReference type="PANTHER" id="PTHR11207:SF0">
    <property type="entry name" value="RIBONUCLEASE 3"/>
    <property type="match status" value="1"/>
</dbReference>
<dbReference type="PANTHER" id="PTHR11207">
    <property type="entry name" value="RIBONUCLEASE III"/>
    <property type="match status" value="1"/>
</dbReference>
<dbReference type="Pfam" id="PF00035">
    <property type="entry name" value="dsrm"/>
    <property type="match status" value="1"/>
</dbReference>
<dbReference type="Pfam" id="PF14622">
    <property type="entry name" value="Ribonucleas_3_3"/>
    <property type="match status" value="1"/>
</dbReference>
<dbReference type="SMART" id="SM00358">
    <property type="entry name" value="DSRM"/>
    <property type="match status" value="1"/>
</dbReference>
<dbReference type="SMART" id="SM00535">
    <property type="entry name" value="RIBOc"/>
    <property type="match status" value="1"/>
</dbReference>
<dbReference type="SUPFAM" id="SSF54768">
    <property type="entry name" value="dsRNA-binding domain-like"/>
    <property type="match status" value="1"/>
</dbReference>
<dbReference type="SUPFAM" id="SSF69065">
    <property type="entry name" value="RNase III domain-like"/>
    <property type="match status" value="1"/>
</dbReference>
<dbReference type="PROSITE" id="PS50137">
    <property type="entry name" value="DS_RBD"/>
    <property type="match status" value="1"/>
</dbReference>
<dbReference type="PROSITE" id="PS00517">
    <property type="entry name" value="RNASE_3_1"/>
    <property type="match status" value="1"/>
</dbReference>
<dbReference type="PROSITE" id="PS50142">
    <property type="entry name" value="RNASE_3_2"/>
    <property type="match status" value="1"/>
</dbReference>
<comment type="function">
    <text evidence="1">Digests double-stranded RNA. Involved in the processing of primary rRNA transcript to yield the immediate precursors to the large and small rRNAs (23S and 16S). Processes some mRNAs, and tRNAs when they are encoded in the rRNA operon. Processes pre-crRNA and tracrRNA of type II CRISPR loci if present in the organism.</text>
</comment>
<comment type="catalytic activity">
    <reaction evidence="1">
        <text>Endonucleolytic cleavage to 5'-phosphomonoester.</text>
        <dbReference type="EC" id="3.1.26.3"/>
    </reaction>
</comment>
<comment type="cofactor">
    <cofactor evidence="1">
        <name>Mg(2+)</name>
        <dbReference type="ChEBI" id="CHEBI:18420"/>
    </cofactor>
</comment>
<comment type="subunit">
    <text evidence="1">Homodimer.</text>
</comment>
<comment type="subcellular location">
    <subcellularLocation>
        <location evidence="1">Cytoplasm</location>
    </subcellularLocation>
</comment>
<comment type="similarity">
    <text evidence="1">Belongs to the ribonuclease III family.</text>
</comment>